<protein>
    <recommendedName>
        <fullName evidence="1">ATP synthase subunit alpha</fullName>
        <ecNumber evidence="1">7.1.2.2</ecNumber>
    </recommendedName>
    <alternativeName>
        <fullName evidence="1">ATP synthase F1 sector subunit alpha</fullName>
    </alternativeName>
    <alternativeName>
        <fullName evidence="1">F-ATPase subunit alpha</fullName>
    </alternativeName>
</protein>
<comment type="function">
    <text evidence="1">Produces ATP from ADP in the presence of a proton gradient across the membrane. The alpha chain is a regulatory subunit.</text>
</comment>
<comment type="catalytic activity">
    <reaction evidence="1">
        <text>ATP + H2O + 4 H(+)(in) = ADP + phosphate + 5 H(+)(out)</text>
        <dbReference type="Rhea" id="RHEA:57720"/>
        <dbReference type="ChEBI" id="CHEBI:15377"/>
        <dbReference type="ChEBI" id="CHEBI:15378"/>
        <dbReference type="ChEBI" id="CHEBI:30616"/>
        <dbReference type="ChEBI" id="CHEBI:43474"/>
        <dbReference type="ChEBI" id="CHEBI:456216"/>
        <dbReference type="EC" id="7.1.2.2"/>
    </reaction>
</comment>
<comment type="subunit">
    <text evidence="1">F-type ATPases have 2 components, CF(1) - the catalytic core - and CF(0) - the membrane proton channel. CF(1) has five subunits: alpha(3), beta(3), gamma(1), delta(1), epsilon(1). CF(0) has three main subunits: a(1), b(2) and c(9-12). The alpha and beta chains form an alternating ring which encloses part of the gamma chain. CF(1) is attached to CF(0) by a central stalk formed by the gamma and epsilon chains, while a peripheral stalk is formed by the delta and b chains.</text>
</comment>
<comment type="subcellular location">
    <subcellularLocation>
        <location evidence="1">Cell inner membrane</location>
        <topology evidence="1">Peripheral membrane protein</topology>
    </subcellularLocation>
</comment>
<comment type="similarity">
    <text evidence="1">Belongs to the ATPase alpha/beta chains family.</text>
</comment>
<evidence type="ECO:0000255" key="1">
    <source>
        <dbReference type="HAMAP-Rule" id="MF_01346"/>
    </source>
</evidence>
<name>ATPA_PSEP1</name>
<accession>A5WBA5</accession>
<sequence length="514" mass="55321">MQQLNPSEISEIIKGRIDNLDVSSQARNEGTVVSVSDGIVRIHGLADVMYGEMIEFPGGVYGMALNLEQDSVGAVILGAYDTLAEGMSAKCTGRILEVPVGKELLGRVVDALGNPIDGKGPLGNTQTDAVEKVAPGVIWRKSVDQPVQTGYKSVDAMIPVGRGQRELIIGDRQIGKTAMAIDAIINQKNSGIFCVYVAVGQKRSTVANIVRKLEETGALANTIVVVASASESAALQFLAPYAGCTMGEFFRDRGEDALIVYDDLSKQAVAYRQISLLLRRPPGREAYPGDVFYLHSRLLERASRVSEEYVEKFTNGAVTGKTGSLTALPIIETQAGDVSAFVPTNVISITDGQIFLESAMFNSGIRPAVNAGVSVSRVGGAAQTKIIKKLSGGIRTALAQYRELAAFAQFASDLDEATRKQLEHGQRVTELMKQKQYAPMSIADMALSLYAAERGFLIDVEVSKIGSFEQALIAFFNRDHAELMAKINVKGDFNDEIDAGLKAGIEKFKATQTW</sequence>
<proteinExistence type="inferred from homology"/>
<keyword id="KW-0066">ATP synthesis</keyword>
<keyword id="KW-0067">ATP-binding</keyword>
<keyword id="KW-0997">Cell inner membrane</keyword>
<keyword id="KW-1003">Cell membrane</keyword>
<keyword id="KW-0139">CF(1)</keyword>
<keyword id="KW-0375">Hydrogen ion transport</keyword>
<keyword id="KW-0406">Ion transport</keyword>
<keyword id="KW-0472">Membrane</keyword>
<keyword id="KW-0547">Nucleotide-binding</keyword>
<keyword id="KW-1278">Translocase</keyword>
<keyword id="KW-0813">Transport</keyword>
<reference key="1">
    <citation type="submission" date="2007-05" db="EMBL/GenBank/DDBJ databases">
        <title>Complete sequence of Pseudomonas putida F1.</title>
        <authorList>
            <consortium name="US DOE Joint Genome Institute"/>
            <person name="Copeland A."/>
            <person name="Lucas S."/>
            <person name="Lapidus A."/>
            <person name="Barry K."/>
            <person name="Detter J.C."/>
            <person name="Glavina del Rio T."/>
            <person name="Hammon N."/>
            <person name="Israni S."/>
            <person name="Dalin E."/>
            <person name="Tice H."/>
            <person name="Pitluck S."/>
            <person name="Chain P."/>
            <person name="Malfatti S."/>
            <person name="Shin M."/>
            <person name="Vergez L."/>
            <person name="Schmutz J."/>
            <person name="Larimer F."/>
            <person name="Land M."/>
            <person name="Hauser L."/>
            <person name="Kyrpides N."/>
            <person name="Lykidis A."/>
            <person name="Parales R."/>
            <person name="Richardson P."/>
        </authorList>
    </citation>
    <scope>NUCLEOTIDE SEQUENCE [LARGE SCALE GENOMIC DNA]</scope>
    <source>
        <strain>ATCC 700007 / DSM 6899 / JCM 31910 / BCRC 17059 / LMG 24140 / F1</strain>
    </source>
</reference>
<gene>
    <name evidence="1" type="primary">atpA</name>
    <name type="ordered locus">Pput_5297</name>
</gene>
<feature type="chain" id="PRO_1000067718" description="ATP synthase subunit alpha">
    <location>
        <begin position="1"/>
        <end position="514"/>
    </location>
</feature>
<feature type="binding site" evidence="1">
    <location>
        <begin position="170"/>
        <end position="177"/>
    </location>
    <ligand>
        <name>ATP</name>
        <dbReference type="ChEBI" id="CHEBI:30616"/>
    </ligand>
</feature>
<feature type="site" description="Required for activity" evidence="1">
    <location>
        <position position="374"/>
    </location>
</feature>
<organism>
    <name type="scientific">Pseudomonas putida (strain ATCC 700007 / DSM 6899 / JCM 31910 / BCRC 17059 / LMG 24140 / F1)</name>
    <dbReference type="NCBI Taxonomy" id="351746"/>
    <lineage>
        <taxon>Bacteria</taxon>
        <taxon>Pseudomonadati</taxon>
        <taxon>Pseudomonadota</taxon>
        <taxon>Gammaproteobacteria</taxon>
        <taxon>Pseudomonadales</taxon>
        <taxon>Pseudomonadaceae</taxon>
        <taxon>Pseudomonas</taxon>
    </lineage>
</organism>
<dbReference type="EC" id="7.1.2.2" evidence="1"/>
<dbReference type="EMBL" id="CP000712">
    <property type="protein sequence ID" value="ABQ81415.1"/>
    <property type="molecule type" value="Genomic_DNA"/>
</dbReference>
<dbReference type="SMR" id="A5WBA5"/>
<dbReference type="KEGG" id="ppf:Pput_5297"/>
<dbReference type="eggNOG" id="COG0056">
    <property type="taxonomic scope" value="Bacteria"/>
</dbReference>
<dbReference type="HOGENOM" id="CLU_010091_2_1_6"/>
<dbReference type="GO" id="GO:0005886">
    <property type="term" value="C:plasma membrane"/>
    <property type="evidence" value="ECO:0007669"/>
    <property type="project" value="UniProtKB-SubCell"/>
</dbReference>
<dbReference type="GO" id="GO:0045259">
    <property type="term" value="C:proton-transporting ATP synthase complex"/>
    <property type="evidence" value="ECO:0007669"/>
    <property type="project" value="UniProtKB-KW"/>
</dbReference>
<dbReference type="GO" id="GO:0043531">
    <property type="term" value="F:ADP binding"/>
    <property type="evidence" value="ECO:0007669"/>
    <property type="project" value="TreeGrafter"/>
</dbReference>
<dbReference type="GO" id="GO:0005524">
    <property type="term" value="F:ATP binding"/>
    <property type="evidence" value="ECO:0007669"/>
    <property type="project" value="UniProtKB-UniRule"/>
</dbReference>
<dbReference type="GO" id="GO:0046933">
    <property type="term" value="F:proton-transporting ATP synthase activity, rotational mechanism"/>
    <property type="evidence" value="ECO:0007669"/>
    <property type="project" value="UniProtKB-UniRule"/>
</dbReference>
<dbReference type="CDD" id="cd18113">
    <property type="entry name" value="ATP-synt_F1_alpha_C"/>
    <property type="match status" value="1"/>
</dbReference>
<dbReference type="CDD" id="cd18116">
    <property type="entry name" value="ATP-synt_F1_alpha_N"/>
    <property type="match status" value="1"/>
</dbReference>
<dbReference type="CDD" id="cd01132">
    <property type="entry name" value="F1-ATPase_alpha_CD"/>
    <property type="match status" value="1"/>
</dbReference>
<dbReference type="FunFam" id="1.20.150.20:FF:000001">
    <property type="entry name" value="ATP synthase subunit alpha"/>
    <property type="match status" value="1"/>
</dbReference>
<dbReference type="FunFam" id="2.40.30.20:FF:000001">
    <property type="entry name" value="ATP synthase subunit alpha"/>
    <property type="match status" value="1"/>
</dbReference>
<dbReference type="FunFam" id="3.40.50.300:FF:000002">
    <property type="entry name" value="ATP synthase subunit alpha"/>
    <property type="match status" value="1"/>
</dbReference>
<dbReference type="Gene3D" id="2.40.30.20">
    <property type="match status" value="1"/>
</dbReference>
<dbReference type="Gene3D" id="1.20.150.20">
    <property type="entry name" value="ATP synthase alpha/beta chain, C-terminal domain"/>
    <property type="match status" value="1"/>
</dbReference>
<dbReference type="Gene3D" id="3.40.50.300">
    <property type="entry name" value="P-loop containing nucleotide triphosphate hydrolases"/>
    <property type="match status" value="1"/>
</dbReference>
<dbReference type="HAMAP" id="MF_01346">
    <property type="entry name" value="ATP_synth_alpha_bact"/>
    <property type="match status" value="1"/>
</dbReference>
<dbReference type="InterPro" id="IPR023366">
    <property type="entry name" value="ATP_synth_asu-like_sf"/>
</dbReference>
<dbReference type="InterPro" id="IPR000793">
    <property type="entry name" value="ATP_synth_asu_C"/>
</dbReference>
<dbReference type="InterPro" id="IPR038376">
    <property type="entry name" value="ATP_synth_asu_C_sf"/>
</dbReference>
<dbReference type="InterPro" id="IPR033732">
    <property type="entry name" value="ATP_synth_F1_a_nt-bd_dom"/>
</dbReference>
<dbReference type="InterPro" id="IPR005294">
    <property type="entry name" value="ATP_synth_F1_asu"/>
</dbReference>
<dbReference type="InterPro" id="IPR020003">
    <property type="entry name" value="ATPase_a/bsu_AS"/>
</dbReference>
<dbReference type="InterPro" id="IPR004100">
    <property type="entry name" value="ATPase_F1/V1/A1_a/bsu_N"/>
</dbReference>
<dbReference type="InterPro" id="IPR036121">
    <property type="entry name" value="ATPase_F1/V1/A1_a/bsu_N_sf"/>
</dbReference>
<dbReference type="InterPro" id="IPR000194">
    <property type="entry name" value="ATPase_F1/V1/A1_a/bsu_nucl-bd"/>
</dbReference>
<dbReference type="InterPro" id="IPR027417">
    <property type="entry name" value="P-loop_NTPase"/>
</dbReference>
<dbReference type="NCBIfam" id="TIGR00962">
    <property type="entry name" value="atpA"/>
    <property type="match status" value="1"/>
</dbReference>
<dbReference type="NCBIfam" id="NF009884">
    <property type="entry name" value="PRK13343.1"/>
    <property type="match status" value="1"/>
</dbReference>
<dbReference type="PANTHER" id="PTHR48082">
    <property type="entry name" value="ATP SYNTHASE SUBUNIT ALPHA, MITOCHONDRIAL"/>
    <property type="match status" value="1"/>
</dbReference>
<dbReference type="PANTHER" id="PTHR48082:SF2">
    <property type="entry name" value="ATP SYNTHASE SUBUNIT ALPHA, MITOCHONDRIAL"/>
    <property type="match status" value="1"/>
</dbReference>
<dbReference type="Pfam" id="PF00006">
    <property type="entry name" value="ATP-synt_ab"/>
    <property type="match status" value="1"/>
</dbReference>
<dbReference type="Pfam" id="PF00306">
    <property type="entry name" value="ATP-synt_ab_C"/>
    <property type="match status" value="1"/>
</dbReference>
<dbReference type="Pfam" id="PF02874">
    <property type="entry name" value="ATP-synt_ab_N"/>
    <property type="match status" value="1"/>
</dbReference>
<dbReference type="PIRSF" id="PIRSF039088">
    <property type="entry name" value="F_ATPase_subunit_alpha"/>
    <property type="match status" value="1"/>
</dbReference>
<dbReference type="SUPFAM" id="SSF47917">
    <property type="entry name" value="C-terminal domain of alpha and beta subunits of F1 ATP synthase"/>
    <property type="match status" value="1"/>
</dbReference>
<dbReference type="SUPFAM" id="SSF50615">
    <property type="entry name" value="N-terminal domain of alpha and beta subunits of F1 ATP synthase"/>
    <property type="match status" value="1"/>
</dbReference>
<dbReference type="SUPFAM" id="SSF52540">
    <property type="entry name" value="P-loop containing nucleoside triphosphate hydrolases"/>
    <property type="match status" value="1"/>
</dbReference>
<dbReference type="PROSITE" id="PS00152">
    <property type="entry name" value="ATPASE_ALPHA_BETA"/>
    <property type="match status" value="1"/>
</dbReference>